<sequence length="328" mass="35279">MTTNFSILASAKALPTTKVTNQELTQLMATSDDWIKQRTGIRSRHVATDETTTSLAVSVAQQLLQQSRLAATAIDLIIVATMSPDYLTPATAPQVQAAIGAEKAIAFDINVACAGFVYGMQLVHQYLQPGQTALLIGSETLSRLVDWHDRSTAVLFGDGAGGLLITAKPNTTTGHWLGGHYATFGADGHYLTAGQQPQVNPWSTRTDGADSNRWAFQMNGRRVYDFATKQVPHSIEQALMQARLESSDIKAFVLHQANARIVKSVGQKLNLATEQLPMNIAQYGNTAAASEPILFAEMVAQKQVQRGDKLVFTGFGGGLSVGSAVIEY</sequence>
<comment type="function">
    <text evidence="1">Catalyzes the condensation reaction of fatty acid synthesis by the addition to an acyl acceptor of two carbons from malonyl-ACP. Catalyzes the first condensation reaction which initiates fatty acid synthesis and may therefore play a role in governing the total rate of fatty acid production. Possesses both acetoacetyl-ACP synthase and acetyl transacylase activities. Its substrate specificity determines the biosynthesis of branched-chain and/or straight-chain of fatty acids.</text>
</comment>
<comment type="catalytic activity">
    <reaction evidence="1">
        <text>malonyl-[ACP] + acetyl-CoA + H(+) = 3-oxobutanoyl-[ACP] + CO2 + CoA</text>
        <dbReference type="Rhea" id="RHEA:12080"/>
        <dbReference type="Rhea" id="RHEA-COMP:9623"/>
        <dbReference type="Rhea" id="RHEA-COMP:9625"/>
        <dbReference type="ChEBI" id="CHEBI:15378"/>
        <dbReference type="ChEBI" id="CHEBI:16526"/>
        <dbReference type="ChEBI" id="CHEBI:57287"/>
        <dbReference type="ChEBI" id="CHEBI:57288"/>
        <dbReference type="ChEBI" id="CHEBI:78449"/>
        <dbReference type="ChEBI" id="CHEBI:78450"/>
        <dbReference type="EC" id="2.3.1.180"/>
    </reaction>
</comment>
<comment type="pathway">
    <text evidence="1">Lipid metabolism; fatty acid biosynthesis.</text>
</comment>
<comment type="subunit">
    <text evidence="1">Homodimer.</text>
</comment>
<comment type="subcellular location">
    <subcellularLocation>
        <location evidence="1">Cytoplasm</location>
    </subcellularLocation>
</comment>
<comment type="domain">
    <text evidence="1">The last Arg residue of the ACP-binding site is essential for the weak association between ACP/AcpP and FabH.</text>
</comment>
<comment type="similarity">
    <text evidence="1">Belongs to the thiolase-like superfamily. FabH family.</text>
</comment>
<organism>
    <name type="scientific">Lactiplantibacillus plantarum (strain ATCC BAA-793 / NCIMB 8826 / WCFS1)</name>
    <name type="common">Lactobacillus plantarum</name>
    <dbReference type="NCBI Taxonomy" id="220668"/>
    <lineage>
        <taxon>Bacteria</taxon>
        <taxon>Bacillati</taxon>
        <taxon>Bacillota</taxon>
        <taxon>Bacilli</taxon>
        <taxon>Lactobacillales</taxon>
        <taxon>Lactobacillaceae</taxon>
        <taxon>Lactiplantibacillus</taxon>
    </lineage>
</organism>
<protein>
    <recommendedName>
        <fullName evidence="1">Beta-ketoacyl-[acyl-carrier-protein] synthase III 2</fullName>
        <shortName evidence="1">Beta-ketoacyl-ACP synthase III 2</shortName>
        <shortName evidence="1">KAS III 2</shortName>
        <ecNumber evidence="1">2.3.1.180</ecNumber>
    </recommendedName>
    <alternativeName>
        <fullName evidence="1">3-oxoacyl-[acyl-carrier-protein] synthase 3 2</fullName>
    </alternativeName>
    <alternativeName>
        <fullName evidence="1">3-oxoacyl-[acyl-carrier-protein] synthase III 2</fullName>
    </alternativeName>
</protein>
<keyword id="KW-0012">Acyltransferase</keyword>
<keyword id="KW-0963">Cytoplasm</keyword>
<keyword id="KW-0275">Fatty acid biosynthesis</keyword>
<keyword id="KW-0276">Fatty acid metabolism</keyword>
<keyword id="KW-0444">Lipid biosynthesis</keyword>
<keyword id="KW-0443">Lipid metabolism</keyword>
<keyword id="KW-0511">Multifunctional enzyme</keyword>
<keyword id="KW-1185">Reference proteome</keyword>
<keyword id="KW-0808">Transferase</keyword>
<proteinExistence type="inferred from homology"/>
<reference key="1">
    <citation type="journal article" date="2003" name="Proc. Natl. Acad. Sci. U.S.A.">
        <title>Complete genome sequence of Lactobacillus plantarum WCFS1.</title>
        <authorList>
            <person name="Kleerebezem M."/>
            <person name="Boekhorst J."/>
            <person name="van Kranenburg R."/>
            <person name="Molenaar D."/>
            <person name="Kuipers O.P."/>
            <person name="Leer R."/>
            <person name="Tarchini R."/>
            <person name="Peters S.A."/>
            <person name="Sandbrink H.M."/>
            <person name="Fiers M.W.E.J."/>
            <person name="Stiekema W."/>
            <person name="Klein Lankhorst R.M."/>
            <person name="Bron P.A."/>
            <person name="Hoffer S.M."/>
            <person name="Nierop Groot M.N."/>
            <person name="Kerkhoven R."/>
            <person name="De Vries M."/>
            <person name="Ursing B."/>
            <person name="De Vos W.M."/>
            <person name="Siezen R.J."/>
        </authorList>
    </citation>
    <scope>NUCLEOTIDE SEQUENCE [LARGE SCALE GENOMIC DNA]</scope>
    <source>
        <strain>ATCC BAA-793 / NCIMB 8826 / WCFS1</strain>
    </source>
</reference>
<reference key="2">
    <citation type="journal article" date="2012" name="J. Bacteriol.">
        <title>Complete resequencing and reannotation of the Lactobacillus plantarum WCFS1 genome.</title>
        <authorList>
            <person name="Siezen R.J."/>
            <person name="Francke C."/>
            <person name="Renckens B."/>
            <person name="Boekhorst J."/>
            <person name="Wels M."/>
            <person name="Kleerebezem M."/>
            <person name="van Hijum S.A."/>
        </authorList>
    </citation>
    <scope>NUCLEOTIDE SEQUENCE [LARGE SCALE GENOMIC DNA]</scope>
    <scope>GENOME REANNOTATION</scope>
    <source>
        <strain>ATCC BAA-793 / NCIMB 8826 / WCFS1</strain>
    </source>
</reference>
<feature type="chain" id="PRO_0000110438" description="Beta-ketoacyl-[acyl-carrier-protein] synthase III 2">
    <location>
        <begin position="1"/>
        <end position="328"/>
    </location>
</feature>
<feature type="region of interest" description="ACP-binding" evidence="1">
    <location>
        <begin position="256"/>
        <end position="260"/>
    </location>
</feature>
<feature type="active site" evidence="1">
    <location>
        <position position="113"/>
    </location>
</feature>
<feature type="active site" evidence="1">
    <location>
        <position position="255"/>
    </location>
</feature>
<feature type="active site" evidence="1">
    <location>
        <position position="285"/>
    </location>
</feature>
<gene>
    <name evidence="1" type="primary">fabH2</name>
    <name type="ordered locus">lp_1671</name>
</gene>
<accession>Q88WG8</accession>
<accession>F9UP35</accession>
<dbReference type="EC" id="2.3.1.180" evidence="1"/>
<dbReference type="EMBL" id="AL935263">
    <property type="protein sequence ID" value="CCC78974.1"/>
    <property type="molecule type" value="Genomic_DNA"/>
</dbReference>
<dbReference type="RefSeq" id="WP_011101499.1">
    <property type="nucleotide sequence ID" value="NC_004567.2"/>
</dbReference>
<dbReference type="RefSeq" id="YP_004889488.1">
    <property type="nucleotide sequence ID" value="NC_004567.2"/>
</dbReference>
<dbReference type="SMR" id="Q88WG8"/>
<dbReference type="STRING" id="220668.lp_1671"/>
<dbReference type="EnsemblBacteria" id="CCC78974">
    <property type="protein sequence ID" value="CCC78974"/>
    <property type="gene ID" value="lp_1671"/>
</dbReference>
<dbReference type="KEGG" id="lpl:lp_1671"/>
<dbReference type="PATRIC" id="fig|220668.9.peg.1410"/>
<dbReference type="eggNOG" id="COG0332">
    <property type="taxonomic scope" value="Bacteria"/>
</dbReference>
<dbReference type="HOGENOM" id="CLU_039592_4_1_9"/>
<dbReference type="OrthoDB" id="9815506at2"/>
<dbReference type="PhylomeDB" id="Q88WG8"/>
<dbReference type="UniPathway" id="UPA00094"/>
<dbReference type="Proteomes" id="UP000000432">
    <property type="component" value="Chromosome"/>
</dbReference>
<dbReference type="GO" id="GO:0005737">
    <property type="term" value="C:cytoplasm"/>
    <property type="evidence" value="ECO:0007669"/>
    <property type="project" value="UniProtKB-SubCell"/>
</dbReference>
<dbReference type="GO" id="GO:0004315">
    <property type="term" value="F:3-oxoacyl-[acyl-carrier-protein] synthase activity"/>
    <property type="evidence" value="ECO:0007669"/>
    <property type="project" value="InterPro"/>
</dbReference>
<dbReference type="GO" id="GO:0033818">
    <property type="term" value="F:beta-ketoacyl-acyl-carrier-protein synthase III activity"/>
    <property type="evidence" value="ECO:0007669"/>
    <property type="project" value="UniProtKB-UniRule"/>
</dbReference>
<dbReference type="GO" id="GO:0006633">
    <property type="term" value="P:fatty acid biosynthetic process"/>
    <property type="evidence" value="ECO:0007669"/>
    <property type="project" value="UniProtKB-UniRule"/>
</dbReference>
<dbReference type="GO" id="GO:0044550">
    <property type="term" value="P:secondary metabolite biosynthetic process"/>
    <property type="evidence" value="ECO:0007669"/>
    <property type="project" value="TreeGrafter"/>
</dbReference>
<dbReference type="CDD" id="cd00830">
    <property type="entry name" value="KAS_III"/>
    <property type="match status" value="1"/>
</dbReference>
<dbReference type="Gene3D" id="3.40.47.10">
    <property type="match status" value="1"/>
</dbReference>
<dbReference type="HAMAP" id="MF_01815">
    <property type="entry name" value="FabH"/>
    <property type="match status" value="1"/>
</dbReference>
<dbReference type="InterPro" id="IPR013747">
    <property type="entry name" value="ACP_syn_III_C"/>
</dbReference>
<dbReference type="InterPro" id="IPR013751">
    <property type="entry name" value="ACP_syn_III_N"/>
</dbReference>
<dbReference type="InterPro" id="IPR004655">
    <property type="entry name" value="FabH"/>
</dbReference>
<dbReference type="InterPro" id="IPR016039">
    <property type="entry name" value="Thiolase-like"/>
</dbReference>
<dbReference type="NCBIfam" id="TIGR00747">
    <property type="entry name" value="fabH"/>
    <property type="match status" value="1"/>
</dbReference>
<dbReference type="NCBIfam" id="NF006829">
    <property type="entry name" value="PRK09352.1"/>
    <property type="match status" value="1"/>
</dbReference>
<dbReference type="PANTHER" id="PTHR34069">
    <property type="entry name" value="3-OXOACYL-[ACYL-CARRIER-PROTEIN] SYNTHASE 3"/>
    <property type="match status" value="1"/>
</dbReference>
<dbReference type="PANTHER" id="PTHR34069:SF2">
    <property type="entry name" value="BETA-KETOACYL-[ACYL-CARRIER-PROTEIN] SYNTHASE III"/>
    <property type="match status" value="1"/>
</dbReference>
<dbReference type="Pfam" id="PF08545">
    <property type="entry name" value="ACP_syn_III"/>
    <property type="match status" value="1"/>
</dbReference>
<dbReference type="Pfam" id="PF08541">
    <property type="entry name" value="ACP_syn_III_C"/>
    <property type="match status" value="1"/>
</dbReference>
<dbReference type="SUPFAM" id="SSF53901">
    <property type="entry name" value="Thiolase-like"/>
    <property type="match status" value="1"/>
</dbReference>
<name>FABH2_LACPL</name>
<evidence type="ECO:0000255" key="1">
    <source>
        <dbReference type="HAMAP-Rule" id="MF_01815"/>
    </source>
</evidence>